<dbReference type="EC" id="2.3.1.274" evidence="1"/>
<dbReference type="EMBL" id="CP000879">
    <property type="protein sequence ID" value="ABX32534.1"/>
    <property type="molecule type" value="Genomic_DNA"/>
</dbReference>
<dbReference type="RefSeq" id="WP_012209631.1">
    <property type="nucleotide sequence ID" value="NC_010003.1"/>
</dbReference>
<dbReference type="SMR" id="A9BGV3"/>
<dbReference type="STRING" id="403833.Pmob_1845"/>
<dbReference type="KEGG" id="pmo:Pmob_1845"/>
<dbReference type="eggNOG" id="COG0416">
    <property type="taxonomic scope" value="Bacteria"/>
</dbReference>
<dbReference type="HOGENOM" id="CLU_039379_1_1_0"/>
<dbReference type="OrthoDB" id="9806408at2"/>
<dbReference type="UniPathway" id="UPA00085"/>
<dbReference type="Proteomes" id="UP000000789">
    <property type="component" value="Chromosome"/>
</dbReference>
<dbReference type="GO" id="GO:0005737">
    <property type="term" value="C:cytoplasm"/>
    <property type="evidence" value="ECO:0007669"/>
    <property type="project" value="UniProtKB-SubCell"/>
</dbReference>
<dbReference type="GO" id="GO:0043811">
    <property type="term" value="F:phosphate:acyl-[acyl carrier protein] acyltransferase activity"/>
    <property type="evidence" value="ECO:0007669"/>
    <property type="project" value="UniProtKB-UniRule"/>
</dbReference>
<dbReference type="GO" id="GO:0006633">
    <property type="term" value="P:fatty acid biosynthetic process"/>
    <property type="evidence" value="ECO:0007669"/>
    <property type="project" value="UniProtKB-UniRule"/>
</dbReference>
<dbReference type="GO" id="GO:0008654">
    <property type="term" value="P:phospholipid biosynthetic process"/>
    <property type="evidence" value="ECO:0007669"/>
    <property type="project" value="UniProtKB-KW"/>
</dbReference>
<dbReference type="Gene3D" id="3.40.718.10">
    <property type="entry name" value="Isopropylmalate Dehydrogenase"/>
    <property type="match status" value="1"/>
</dbReference>
<dbReference type="HAMAP" id="MF_00019">
    <property type="entry name" value="PlsX"/>
    <property type="match status" value="1"/>
</dbReference>
<dbReference type="InterPro" id="IPR003664">
    <property type="entry name" value="FA_synthesis"/>
</dbReference>
<dbReference type="InterPro" id="IPR012281">
    <property type="entry name" value="Phospholipid_synth_PlsX-like"/>
</dbReference>
<dbReference type="NCBIfam" id="TIGR00182">
    <property type="entry name" value="plsX"/>
    <property type="match status" value="1"/>
</dbReference>
<dbReference type="PANTHER" id="PTHR30100">
    <property type="entry name" value="FATTY ACID/PHOSPHOLIPID SYNTHESIS PROTEIN PLSX"/>
    <property type="match status" value="1"/>
</dbReference>
<dbReference type="PANTHER" id="PTHR30100:SF1">
    <property type="entry name" value="PHOSPHATE ACYLTRANSFERASE"/>
    <property type="match status" value="1"/>
</dbReference>
<dbReference type="Pfam" id="PF02504">
    <property type="entry name" value="FA_synthesis"/>
    <property type="match status" value="1"/>
</dbReference>
<dbReference type="PIRSF" id="PIRSF002465">
    <property type="entry name" value="Phsphlp_syn_PlsX"/>
    <property type="match status" value="1"/>
</dbReference>
<dbReference type="SUPFAM" id="SSF53659">
    <property type="entry name" value="Isocitrate/Isopropylmalate dehydrogenase-like"/>
    <property type="match status" value="1"/>
</dbReference>
<name>PLSX_PETMO</name>
<keyword id="KW-0963">Cytoplasm</keyword>
<keyword id="KW-0444">Lipid biosynthesis</keyword>
<keyword id="KW-0443">Lipid metabolism</keyword>
<keyword id="KW-0594">Phospholipid biosynthesis</keyword>
<keyword id="KW-1208">Phospholipid metabolism</keyword>
<keyword id="KW-0808">Transferase</keyword>
<gene>
    <name evidence="1" type="primary">plsX</name>
    <name type="ordered locus">Pmob_1845</name>
</gene>
<evidence type="ECO:0000255" key="1">
    <source>
        <dbReference type="HAMAP-Rule" id="MF_00019"/>
    </source>
</evidence>
<organism>
    <name type="scientific">Petrotoga mobilis (strain DSM 10674 / SJ95)</name>
    <dbReference type="NCBI Taxonomy" id="403833"/>
    <lineage>
        <taxon>Bacteria</taxon>
        <taxon>Thermotogati</taxon>
        <taxon>Thermotogota</taxon>
        <taxon>Thermotogae</taxon>
        <taxon>Petrotogales</taxon>
        <taxon>Petrotogaceae</taxon>
        <taxon>Petrotoga</taxon>
    </lineage>
</organism>
<comment type="function">
    <text evidence="1">Catalyzes the reversible formation of acyl-phosphate (acyl-PO(4)) from acyl-[acyl-carrier-protein] (acyl-ACP). This enzyme utilizes acyl-ACP as fatty acyl donor, but not acyl-CoA.</text>
</comment>
<comment type="catalytic activity">
    <reaction evidence="1">
        <text>a fatty acyl-[ACP] + phosphate = an acyl phosphate + holo-[ACP]</text>
        <dbReference type="Rhea" id="RHEA:42292"/>
        <dbReference type="Rhea" id="RHEA-COMP:9685"/>
        <dbReference type="Rhea" id="RHEA-COMP:14125"/>
        <dbReference type="ChEBI" id="CHEBI:43474"/>
        <dbReference type="ChEBI" id="CHEBI:59918"/>
        <dbReference type="ChEBI" id="CHEBI:64479"/>
        <dbReference type="ChEBI" id="CHEBI:138651"/>
        <dbReference type="EC" id="2.3.1.274"/>
    </reaction>
</comment>
<comment type="pathway">
    <text evidence="1">Lipid metabolism; phospholipid metabolism.</text>
</comment>
<comment type="subunit">
    <text evidence="1">Homodimer. Probably interacts with PlsY.</text>
</comment>
<comment type="subcellular location">
    <subcellularLocation>
        <location evidence="1">Cytoplasm</location>
    </subcellularLocation>
    <text evidence="1">Associated with the membrane possibly through PlsY.</text>
</comment>
<comment type="similarity">
    <text evidence="1">Belongs to the PlsX family.</text>
</comment>
<proteinExistence type="inferred from homology"/>
<protein>
    <recommendedName>
        <fullName evidence="1">Phosphate acyltransferase</fullName>
        <ecNumber evidence="1">2.3.1.274</ecNumber>
    </recommendedName>
    <alternativeName>
        <fullName evidence="1">Acyl-ACP phosphotransacylase</fullName>
    </alternativeName>
    <alternativeName>
        <fullName evidence="1">Acyl-[acyl-carrier-protein]--phosphate acyltransferase</fullName>
    </alternativeName>
    <alternativeName>
        <fullName evidence="1">Phosphate-acyl-ACP acyltransferase</fullName>
    </alternativeName>
</protein>
<reference key="1">
    <citation type="submission" date="2007-11" db="EMBL/GenBank/DDBJ databases">
        <title>Complete sequence of Petroga mobilis SJ95.</title>
        <authorList>
            <consortium name="US DOE Joint Genome Institute"/>
            <person name="Copeland A."/>
            <person name="Lucas S."/>
            <person name="Lapidus A."/>
            <person name="Barry K."/>
            <person name="Glavina del Rio T."/>
            <person name="Dalin E."/>
            <person name="Tice H."/>
            <person name="Pitluck S."/>
            <person name="Meincke L."/>
            <person name="Brettin T."/>
            <person name="Bruce D."/>
            <person name="Detter J.C."/>
            <person name="Han C."/>
            <person name="Kuske C.R."/>
            <person name="Schmutz J."/>
            <person name="Larimer F."/>
            <person name="Land M."/>
            <person name="Hauser L."/>
            <person name="Kyrpides N."/>
            <person name="Mikhailova N."/>
            <person name="Noll K."/>
            <person name="Richardson P."/>
        </authorList>
    </citation>
    <scope>NUCLEOTIDE SEQUENCE [LARGE SCALE GENOMIC DNA]</scope>
    <source>
        <strain>DSM 10674 / SJ95</strain>
    </source>
</reference>
<sequence>MNSVKIGIDLYGGDNAPSSVVEGALFALKNKFLSPEELVIVGNEISKEDLDKISNLQIVPAKNLVSNETKPTEVLKMKESSMYVGCEMLKNNELNAFVSAGNTGALLSSGTFVAGRLPGIKRPALVLALPSKSNKPKILVDAGANAEVKAEHFYDFAREGIAYAKFLNLENPRVGILNIGSEDEKGNSIVREASNLLKEEKKFNYVGYVEARELFDDTCDIIVTDGFTGNNVLKTMEGTAYFILHELKETIKKGGLFTKLGALFLRGSLKSLVNKIDYRSYGGTFFLGVNGVLVKAHGSSDAEAIANALYVAYRAAKFDLIEKIEI</sequence>
<accession>A9BGV3</accession>
<feature type="chain" id="PRO_0000329250" description="Phosphate acyltransferase">
    <location>
        <begin position="1"/>
        <end position="326"/>
    </location>
</feature>